<sequence length="185" mass="20593">MANQIIDQAKVNMGKTEESLQRELGNIRAGRANASLLNQITVEYYGAPTPLNQMAAITIPEPRVLQVSPYDKSSLKNIETALNASDLGINPANDGDVIRLVIPQLTGERRKEIAKEVGKYSESAKIAIRNIRREGLDKLKRQEKDGDITEDDLHRLEKDMQKATDDATKRIDEIAAAKEKEITEV</sequence>
<proteinExistence type="inferred from homology"/>
<gene>
    <name evidence="1" type="primary">frr</name>
    <name type="ordered locus">LSEI_1583</name>
</gene>
<accession>Q038L5</accession>
<protein>
    <recommendedName>
        <fullName evidence="1">Ribosome-recycling factor</fullName>
        <shortName evidence="1">RRF</shortName>
    </recommendedName>
    <alternativeName>
        <fullName evidence="1">Ribosome-releasing factor</fullName>
    </alternativeName>
</protein>
<feature type="chain" id="PRO_1000003181" description="Ribosome-recycling factor">
    <location>
        <begin position="1"/>
        <end position="185"/>
    </location>
</feature>
<comment type="function">
    <text evidence="1">Responsible for the release of ribosomes from messenger RNA at the termination of protein biosynthesis. May increase the efficiency of translation by recycling ribosomes from one round of translation to another.</text>
</comment>
<comment type="subcellular location">
    <subcellularLocation>
        <location evidence="1">Cytoplasm</location>
    </subcellularLocation>
</comment>
<comment type="similarity">
    <text evidence="1">Belongs to the RRF family.</text>
</comment>
<reference key="1">
    <citation type="journal article" date="2006" name="Proc. Natl. Acad. Sci. U.S.A.">
        <title>Comparative genomics of the lactic acid bacteria.</title>
        <authorList>
            <person name="Makarova K.S."/>
            <person name="Slesarev A."/>
            <person name="Wolf Y.I."/>
            <person name="Sorokin A."/>
            <person name="Mirkin B."/>
            <person name="Koonin E.V."/>
            <person name="Pavlov A."/>
            <person name="Pavlova N."/>
            <person name="Karamychev V."/>
            <person name="Polouchine N."/>
            <person name="Shakhova V."/>
            <person name="Grigoriev I."/>
            <person name="Lou Y."/>
            <person name="Rohksar D."/>
            <person name="Lucas S."/>
            <person name="Huang K."/>
            <person name="Goodstein D.M."/>
            <person name="Hawkins T."/>
            <person name="Plengvidhya V."/>
            <person name="Welker D."/>
            <person name="Hughes J."/>
            <person name="Goh Y."/>
            <person name="Benson A."/>
            <person name="Baldwin K."/>
            <person name="Lee J.-H."/>
            <person name="Diaz-Muniz I."/>
            <person name="Dosti B."/>
            <person name="Smeianov V."/>
            <person name="Wechter W."/>
            <person name="Barabote R."/>
            <person name="Lorca G."/>
            <person name="Altermann E."/>
            <person name="Barrangou R."/>
            <person name="Ganesan B."/>
            <person name="Xie Y."/>
            <person name="Rawsthorne H."/>
            <person name="Tamir D."/>
            <person name="Parker C."/>
            <person name="Breidt F."/>
            <person name="Broadbent J.R."/>
            <person name="Hutkins R."/>
            <person name="O'Sullivan D."/>
            <person name="Steele J."/>
            <person name="Unlu G."/>
            <person name="Saier M.H. Jr."/>
            <person name="Klaenhammer T."/>
            <person name="Richardson P."/>
            <person name="Kozyavkin S."/>
            <person name="Weimer B.C."/>
            <person name="Mills D.A."/>
        </authorList>
    </citation>
    <scope>NUCLEOTIDE SEQUENCE [LARGE SCALE GENOMIC DNA]</scope>
    <source>
        <strain>ATCC 334 / BCRC 17002 / CCUG 31169 / CIP 107868 / KCTC 3260 / NRRL B-441</strain>
    </source>
</reference>
<keyword id="KW-0963">Cytoplasm</keyword>
<keyword id="KW-0648">Protein biosynthesis</keyword>
<keyword id="KW-1185">Reference proteome</keyword>
<organism>
    <name type="scientific">Lacticaseibacillus paracasei (strain ATCC 334 / BCRC 17002 / CCUG 31169 / CIP 107868 / KCTC 3260 / NRRL B-441)</name>
    <name type="common">Lactobacillus paracasei</name>
    <dbReference type="NCBI Taxonomy" id="321967"/>
    <lineage>
        <taxon>Bacteria</taxon>
        <taxon>Bacillati</taxon>
        <taxon>Bacillota</taxon>
        <taxon>Bacilli</taxon>
        <taxon>Lactobacillales</taxon>
        <taxon>Lactobacillaceae</taxon>
        <taxon>Lacticaseibacillus</taxon>
    </lineage>
</organism>
<name>RRF_LACP3</name>
<dbReference type="EMBL" id="CP000423">
    <property type="protein sequence ID" value="ABJ70357.1"/>
    <property type="molecule type" value="Genomic_DNA"/>
</dbReference>
<dbReference type="RefSeq" id="WP_003598868.1">
    <property type="nucleotide sequence ID" value="NC_008526.1"/>
</dbReference>
<dbReference type="RefSeq" id="YP_806799.1">
    <property type="nucleotide sequence ID" value="NC_008526.1"/>
</dbReference>
<dbReference type="SMR" id="Q038L5"/>
<dbReference type="STRING" id="321967.LSEI_1583"/>
<dbReference type="PaxDb" id="321967-LSEI_1583"/>
<dbReference type="KEGG" id="lca:LSEI_1583"/>
<dbReference type="PATRIC" id="fig|321967.11.peg.1563"/>
<dbReference type="HOGENOM" id="CLU_073981_2_0_9"/>
<dbReference type="Proteomes" id="UP000001651">
    <property type="component" value="Chromosome"/>
</dbReference>
<dbReference type="GO" id="GO:0005737">
    <property type="term" value="C:cytoplasm"/>
    <property type="evidence" value="ECO:0007669"/>
    <property type="project" value="UniProtKB-SubCell"/>
</dbReference>
<dbReference type="GO" id="GO:0043023">
    <property type="term" value="F:ribosomal large subunit binding"/>
    <property type="evidence" value="ECO:0007669"/>
    <property type="project" value="TreeGrafter"/>
</dbReference>
<dbReference type="GO" id="GO:0006415">
    <property type="term" value="P:translational termination"/>
    <property type="evidence" value="ECO:0007669"/>
    <property type="project" value="UniProtKB-UniRule"/>
</dbReference>
<dbReference type="CDD" id="cd00520">
    <property type="entry name" value="RRF"/>
    <property type="match status" value="1"/>
</dbReference>
<dbReference type="FunFam" id="1.10.132.20:FF:000001">
    <property type="entry name" value="Ribosome-recycling factor"/>
    <property type="match status" value="1"/>
</dbReference>
<dbReference type="FunFam" id="3.30.1360.40:FF:000001">
    <property type="entry name" value="Ribosome-recycling factor"/>
    <property type="match status" value="1"/>
</dbReference>
<dbReference type="Gene3D" id="3.30.1360.40">
    <property type="match status" value="1"/>
</dbReference>
<dbReference type="Gene3D" id="1.10.132.20">
    <property type="entry name" value="Ribosome-recycling factor"/>
    <property type="match status" value="1"/>
</dbReference>
<dbReference type="HAMAP" id="MF_00040">
    <property type="entry name" value="RRF"/>
    <property type="match status" value="1"/>
</dbReference>
<dbReference type="InterPro" id="IPR002661">
    <property type="entry name" value="Ribosome_recyc_fac"/>
</dbReference>
<dbReference type="InterPro" id="IPR023584">
    <property type="entry name" value="Ribosome_recyc_fac_dom"/>
</dbReference>
<dbReference type="InterPro" id="IPR036191">
    <property type="entry name" value="RRF_sf"/>
</dbReference>
<dbReference type="NCBIfam" id="TIGR00496">
    <property type="entry name" value="frr"/>
    <property type="match status" value="1"/>
</dbReference>
<dbReference type="PANTHER" id="PTHR20982:SF3">
    <property type="entry name" value="MITOCHONDRIAL RIBOSOME RECYCLING FACTOR PSEUDO 1"/>
    <property type="match status" value="1"/>
</dbReference>
<dbReference type="PANTHER" id="PTHR20982">
    <property type="entry name" value="RIBOSOME RECYCLING FACTOR"/>
    <property type="match status" value="1"/>
</dbReference>
<dbReference type="Pfam" id="PF01765">
    <property type="entry name" value="RRF"/>
    <property type="match status" value="1"/>
</dbReference>
<dbReference type="SUPFAM" id="SSF55194">
    <property type="entry name" value="Ribosome recycling factor, RRF"/>
    <property type="match status" value="1"/>
</dbReference>
<evidence type="ECO:0000255" key="1">
    <source>
        <dbReference type="HAMAP-Rule" id="MF_00040"/>
    </source>
</evidence>